<proteinExistence type="inferred from homology"/>
<organism>
    <name type="scientific">Pyrobaculum aerophilum (strain ATCC 51768 / DSM 7523 / JCM 9630 / CIP 104966 / NBRC 100827 / IM2)</name>
    <dbReference type="NCBI Taxonomy" id="178306"/>
    <lineage>
        <taxon>Archaea</taxon>
        <taxon>Thermoproteota</taxon>
        <taxon>Thermoprotei</taxon>
        <taxon>Thermoproteales</taxon>
        <taxon>Thermoproteaceae</taxon>
        <taxon>Pyrobaculum</taxon>
    </lineage>
</organism>
<name>SYM_PYRAE</name>
<protein>
    <recommendedName>
        <fullName evidence="1">Methionine--tRNA ligase</fullName>
        <ecNumber evidence="1">6.1.1.10</ecNumber>
    </recommendedName>
    <alternativeName>
        <fullName evidence="1">Methionyl-tRNA synthetase</fullName>
        <shortName evidence="1">MetRS</shortName>
    </alternativeName>
</protein>
<feature type="chain" id="PRO_0000139195" description="Methionine--tRNA ligase">
    <location>
        <begin position="1"/>
        <end position="570"/>
    </location>
</feature>
<feature type="short sequence motif" description="'HIGH' region">
    <location>
        <begin position="11"/>
        <end position="21"/>
    </location>
</feature>
<feature type="short sequence motif" description="'KMSKS' region">
    <location>
        <begin position="333"/>
        <end position="337"/>
    </location>
</feature>
<feature type="binding site" evidence="1">
    <location>
        <position position="143"/>
    </location>
    <ligand>
        <name>Zn(2+)</name>
        <dbReference type="ChEBI" id="CHEBI:29105"/>
    </ligand>
</feature>
<feature type="binding site" evidence="1">
    <location>
        <position position="146"/>
    </location>
    <ligand>
        <name>Zn(2+)</name>
        <dbReference type="ChEBI" id="CHEBI:29105"/>
    </ligand>
</feature>
<feature type="binding site" evidence="1">
    <location>
        <position position="156"/>
    </location>
    <ligand>
        <name>Zn(2+)</name>
        <dbReference type="ChEBI" id="CHEBI:29105"/>
    </ligand>
</feature>
<feature type="binding site" evidence="1">
    <location>
        <position position="159"/>
    </location>
    <ligand>
        <name>Zn(2+)</name>
        <dbReference type="ChEBI" id="CHEBI:29105"/>
    </ligand>
</feature>
<feature type="binding site" evidence="1">
    <location>
        <position position="336"/>
    </location>
    <ligand>
        <name>ATP</name>
        <dbReference type="ChEBI" id="CHEBI:30616"/>
    </ligand>
</feature>
<reference key="1">
    <citation type="journal article" date="2002" name="Proc. Natl. Acad. Sci. U.S.A.">
        <title>Genome sequence of the hyperthermophilic crenarchaeon Pyrobaculum aerophilum.</title>
        <authorList>
            <person name="Fitz-Gibbon S.T."/>
            <person name="Ladner H."/>
            <person name="Kim U.-J."/>
            <person name="Stetter K.O."/>
            <person name="Simon M.I."/>
            <person name="Miller J.H."/>
        </authorList>
    </citation>
    <scope>NUCLEOTIDE SEQUENCE [LARGE SCALE GENOMIC DNA]</scope>
    <source>
        <strain>ATCC 51768 / DSM 7523 / JCM 9630 / CIP 104966 / NBRC 100827 / IM2</strain>
    </source>
</reference>
<dbReference type="EC" id="6.1.1.10" evidence="1"/>
<dbReference type="EMBL" id="AE009441">
    <property type="protein sequence ID" value="AAL64552.1"/>
    <property type="molecule type" value="Genomic_DNA"/>
</dbReference>
<dbReference type="RefSeq" id="WP_011009020.1">
    <property type="nucleotide sequence ID" value="NC_003364.1"/>
</dbReference>
<dbReference type="SMR" id="Q8ZU56"/>
<dbReference type="FunCoup" id="Q8ZU56">
    <property type="interactions" value="278"/>
</dbReference>
<dbReference type="STRING" id="178306.PAE2940"/>
<dbReference type="EnsemblBacteria" id="AAL64552">
    <property type="protein sequence ID" value="AAL64552"/>
    <property type="gene ID" value="PAE2940"/>
</dbReference>
<dbReference type="GeneID" id="1463716"/>
<dbReference type="KEGG" id="pai:PAE2940"/>
<dbReference type="PATRIC" id="fig|178306.9.peg.2201"/>
<dbReference type="eggNOG" id="arCOG00810">
    <property type="taxonomic scope" value="Archaea"/>
</dbReference>
<dbReference type="HOGENOM" id="CLU_009710_1_2_2"/>
<dbReference type="InParanoid" id="Q8ZU56"/>
<dbReference type="Proteomes" id="UP000002439">
    <property type="component" value="Chromosome"/>
</dbReference>
<dbReference type="GO" id="GO:0017101">
    <property type="term" value="C:aminoacyl-tRNA synthetase multienzyme complex"/>
    <property type="evidence" value="ECO:0000318"/>
    <property type="project" value="GO_Central"/>
</dbReference>
<dbReference type="GO" id="GO:0005829">
    <property type="term" value="C:cytosol"/>
    <property type="evidence" value="ECO:0000318"/>
    <property type="project" value="GO_Central"/>
</dbReference>
<dbReference type="GO" id="GO:0005524">
    <property type="term" value="F:ATP binding"/>
    <property type="evidence" value="ECO:0007669"/>
    <property type="project" value="UniProtKB-UniRule"/>
</dbReference>
<dbReference type="GO" id="GO:0046872">
    <property type="term" value="F:metal ion binding"/>
    <property type="evidence" value="ECO:0007669"/>
    <property type="project" value="UniProtKB-KW"/>
</dbReference>
<dbReference type="GO" id="GO:0004825">
    <property type="term" value="F:methionine-tRNA ligase activity"/>
    <property type="evidence" value="ECO:0000318"/>
    <property type="project" value="GO_Central"/>
</dbReference>
<dbReference type="GO" id="GO:0006431">
    <property type="term" value="P:methionyl-tRNA aminoacylation"/>
    <property type="evidence" value="ECO:0000318"/>
    <property type="project" value="GO_Central"/>
</dbReference>
<dbReference type="CDD" id="cd07957">
    <property type="entry name" value="Anticodon_Ia_Met"/>
    <property type="match status" value="1"/>
</dbReference>
<dbReference type="CDD" id="cd00814">
    <property type="entry name" value="MetRS_core"/>
    <property type="match status" value="1"/>
</dbReference>
<dbReference type="FunFam" id="2.20.28.20:FF:000001">
    <property type="entry name" value="Methionine--tRNA ligase"/>
    <property type="match status" value="1"/>
</dbReference>
<dbReference type="Gene3D" id="3.40.50.620">
    <property type="entry name" value="HUPs"/>
    <property type="match status" value="1"/>
</dbReference>
<dbReference type="Gene3D" id="1.10.730.10">
    <property type="entry name" value="Isoleucyl-tRNA Synthetase, Domain 1"/>
    <property type="match status" value="1"/>
</dbReference>
<dbReference type="Gene3D" id="2.20.28.20">
    <property type="entry name" value="Methionyl-tRNA synthetase, Zn-domain"/>
    <property type="match status" value="1"/>
</dbReference>
<dbReference type="HAMAP" id="MF_00098">
    <property type="entry name" value="Met_tRNA_synth_type1"/>
    <property type="match status" value="1"/>
</dbReference>
<dbReference type="InterPro" id="IPR041872">
    <property type="entry name" value="Anticodon_Met"/>
</dbReference>
<dbReference type="InterPro" id="IPR023458">
    <property type="entry name" value="Met-tRNA_ligase_1"/>
</dbReference>
<dbReference type="InterPro" id="IPR014758">
    <property type="entry name" value="Met-tRNA_synth"/>
</dbReference>
<dbReference type="InterPro" id="IPR015413">
    <property type="entry name" value="Methionyl/Leucyl_tRNA_Synth"/>
</dbReference>
<dbReference type="InterPro" id="IPR033911">
    <property type="entry name" value="MetRS_core"/>
</dbReference>
<dbReference type="InterPro" id="IPR029038">
    <property type="entry name" value="MetRS_Zn"/>
</dbReference>
<dbReference type="InterPro" id="IPR014729">
    <property type="entry name" value="Rossmann-like_a/b/a_fold"/>
</dbReference>
<dbReference type="InterPro" id="IPR009080">
    <property type="entry name" value="tRNAsynth_Ia_anticodon-bd"/>
</dbReference>
<dbReference type="NCBIfam" id="TIGR00398">
    <property type="entry name" value="metG"/>
    <property type="match status" value="1"/>
</dbReference>
<dbReference type="PANTHER" id="PTHR45765">
    <property type="entry name" value="METHIONINE--TRNA LIGASE"/>
    <property type="match status" value="1"/>
</dbReference>
<dbReference type="PANTHER" id="PTHR45765:SF1">
    <property type="entry name" value="METHIONINE--TRNA LIGASE, CYTOPLASMIC"/>
    <property type="match status" value="1"/>
</dbReference>
<dbReference type="Pfam" id="PF19303">
    <property type="entry name" value="Anticodon_3"/>
    <property type="match status" value="1"/>
</dbReference>
<dbReference type="Pfam" id="PF09334">
    <property type="entry name" value="tRNA-synt_1g"/>
    <property type="match status" value="1"/>
</dbReference>
<dbReference type="PRINTS" id="PR01041">
    <property type="entry name" value="TRNASYNTHMET"/>
</dbReference>
<dbReference type="SUPFAM" id="SSF47323">
    <property type="entry name" value="Anticodon-binding domain of a subclass of class I aminoacyl-tRNA synthetases"/>
    <property type="match status" value="1"/>
</dbReference>
<dbReference type="SUPFAM" id="SSF57770">
    <property type="entry name" value="Methionyl-tRNA synthetase (MetRS), Zn-domain"/>
    <property type="match status" value="1"/>
</dbReference>
<dbReference type="SUPFAM" id="SSF52374">
    <property type="entry name" value="Nucleotidylyl transferase"/>
    <property type="match status" value="1"/>
</dbReference>
<comment type="function">
    <text evidence="1">Is required not only for elongation of protein synthesis but also for the initiation of all mRNA translation through initiator tRNA(fMet) aminoacylation.</text>
</comment>
<comment type="catalytic activity">
    <reaction evidence="1">
        <text>tRNA(Met) + L-methionine + ATP = L-methionyl-tRNA(Met) + AMP + diphosphate</text>
        <dbReference type="Rhea" id="RHEA:13481"/>
        <dbReference type="Rhea" id="RHEA-COMP:9667"/>
        <dbReference type="Rhea" id="RHEA-COMP:9698"/>
        <dbReference type="ChEBI" id="CHEBI:30616"/>
        <dbReference type="ChEBI" id="CHEBI:33019"/>
        <dbReference type="ChEBI" id="CHEBI:57844"/>
        <dbReference type="ChEBI" id="CHEBI:78442"/>
        <dbReference type="ChEBI" id="CHEBI:78530"/>
        <dbReference type="ChEBI" id="CHEBI:456215"/>
        <dbReference type="EC" id="6.1.1.10"/>
    </reaction>
</comment>
<comment type="cofactor">
    <cofactor evidence="1">
        <name>Zn(2+)</name>
        <dbReference type="ChEBI" id="CHEBI:29105"/>
    </cofactor>
    <text evidence="1">Binds 1 zinc ion per subunit.</text>
</comment>
<comment type="subcellular location">
    <subcellularLocation>
        <location evidence="1">Cytoplasm</location>
    </subcellularLocation>
</comment>
<comment type="similarity">
    <text evidence="1">Belongs to the class-I aminoacyl-tRNA synthetase family. MetG type 1 subfamily.</text>
</comment>
<sequence length="570" mass="65753">MAKYVIGSAWPYVQTVPHLGNMIGSVLSADVYARYLRLKGHEVVFVSGSDVHGTPVEVEAIQLGVDPAEYSMKMHAIVAELFKKWNISFDLYTHTHSETHIKFVQDFYLKIYENGYIFTKEDEVPYCPRDKIYLPDRFIIGKCPYCGYERARGDQCENCGRLLDPKQLIEPKCAVCGSKPEWRITKHWYLDLRRLEDRIRKYVEENPHLPPNAKEMSLAMLKEGLRPRAVTRDNKWGIPAPFPGAEGKTIYVWFEAVLGYISAVVEYFKKIGREEEWKRFWLDPETKVVFFVGKDNVPFHVIILPALLLANGGGYVMPTTTASTEYLLYEGDKFSKSRRWGVWIDEALQLLPADYWRFVLIYIRPENRDTNFSWSTALEIINKVLNDDVGNYANRVLSFIKNRMGGAVPPRGKPSRDDEEFIEKVKRLFEKAEAHYEAIELKDAVHTVVEIAREGNKYLNARAPWDLVKKDVDAANAVMYHAYWSLKFLAVGLAPAIPESAEQLWKMMGLDAPLTWEEAKRPPAVGKALGEVRPLFRKITEEEVKALLAKLEELRNQKYSRKYPWEQVVI</sequence>
<accession>Q8ZU56</accession>
<gene>
    <name evidence="1" type="primary">metG</name>
    <name type="ordered locus">PAE2940</name>
</gene>
<evidence type="ECO:0000255" key="1">
    <source>
        <dbReference type="HAMAP-Rule" id="MF_00098"/>
    </source>
</evidence>
<keyword id="KW-0030">Aminoacyl-tRNA synthetase</keyword>
<keyword id="KW-0067">ATP-binding</keyword>
<keyword id="KW-0963">Cytoplasm</keyword>
<keyword id="KW-0436">Ligase</keyword>
<keyword id="KW-0479">Metal-binding</keyword>
<keyword id="KW-0547">Nucleotide-binding</keyword>
<keyword id="KW-0648">Protein biosynthesis</keyword>
<keyword id="KW-1185">Reference proteome</keyword>
<keyword id="KW-0862">Zinc</keyword>